<reference key="1">
    <citation type="submission" date="2003-02" db="EMBL/GenBank/DDBJ databases">
        <title>Complete nucleotide sequence of Pinus koraiensis.</title>
        <authorList>
            <person name="Noh E.W."/>
            <person name="Lee J.S."/>
            <person name="Choi Y.I."/>
            <person name="Han M.S."/>
            <person name="Yi Y.S."/>
            <person name="Han S.U."/>
        </authorList>
    </citation>
    <scope>NUCLEOTIDE SEQUENCE [LARGE SCALE GENOMIC DNA]</scope>
    <source>
        <strain>KangWon16</strain>
    </source>
</reference>
<dbReference type="EMBL" id="AY228468">
    <property type="protein sequence ID" value="ABP35359.1"/>
    <property type="status" value="ALT_INIT"/>
    <property type="molecule type" value="Genomic_DNA"/>
</dbReference>
<dbReference type="EMBL" id="AY228468">
    <property type="protein sequence ID" value="ABP35360.1"/>
    <property type="molecule type" value="Genomic_DNA"/>
</dbReference>
<dbReference type="RefSeq" id="YP_001152113.1">
    <property type="nucleotide sequence ID" value="NC_004677.2"/>
</dbReference>
<dbReference type="RefSeq" id="YP_001152114.1">
    <property type="nucleotide sequence ID" value="NC_004677.2"/>
</dbReference>
<dbReference type="SMR" id="A4QM32"/>
<dbReference type="GeneID" id="5048520"/>
<dbReference type="GeneID" id="5048521"/>
<dbReference type="GO" id="GO:0009706">
    <property type="term" value="C:chloroplast inner membrane"/>
    <property type="evidence" value="ECO:0007669"/>
    <property type="project" value="UniProtKB-SubCell"/>
</dbReference>
<dbReference type="GO" id="GO:0015297">
    <property type="term" value="F:antiporter activity"/>
    <property type="evidence" value="ECO:0007669"/>
    <property type="project" value="UniProtKB-KW"/>
</dbReference>
<dbReference type="GO" id="GO:0015078">
    <property type="term" value="F:proton transmembrane transporter activity"/>
    <property type="evidence" value="ECO:0007669"/>
    <property type="project" value="UniProtKB-UniRule"/>
</dbReference>
<dbReference type="GO" id="GO:0006813">
    <property type="term" value="P:potassium ion transport"/>
    <property type="evidence" value="ECO:0007669"/>
    <property type="project" value="UniProtKB-UniRule"/>
</dbReference>
<dbReference type="HAMAP" id="MF_01308">
    <property type="entry name" value="CemA_PxcA"/>
    <property type="match status" value="1"/>
</dbReference>
<dbReference type="InterPro" id="IPR004282">
    <property type="entry name" value="CemA"/>
</dbReference>
<dbReference type="PANTHER" id="PTHR33650:SF2">
    <property type="entry name" value="CHLOROPLAST ENVELOPE MEMBRANE PROTEIN"/>
    <property type="match status" value="1"/>
</dbReference>
<dbReference type="PANTHER" id="PTHR33650">
    <property type="entry name" value="CHLOROPLAST ENVELOPE MEMBRANE PROTEIN-RELATED"/>
    <property type="match status" value="1"/>
</dbReference>
<dbReference type="Pfam" id="PF03040">
    <property type="entry name" value="CemA"/>
    <property type="match status" value="1"/>
</dbReference>
<evidence type="ECO:0000255" key="1">
    <source>
        <dbReference type="HAMAP-Rule" id="MF_01308"/>
    </source>
</evidence>
<evidence type="ECO:0000305" key="2"/>
<organism>
    <name type="scientific">Pinus koraiensis</name>
    <name type="common">Korean pine</name>
    <dbReference type="NCBI Taxonomy" id="88728"/>
    <lineage>
        <taxon>Eukaryota</taxon>
        <taxon>Viridiplantae</taxon>
        <taxon>Streptophyta</taxon>
        <taxon>Embryophyta</taxon>
        <taxon>Tracheophyta</taxon>
        <taxon>Spermatophyta</taxon>
        <taxon>Pinopsida</taxon>
        <taxon>Pinidae</taxon>
        <taxon>Conifers I</taxon>
        <taxon>Pinales</taxon>
        <taxon>Pinaceae</taxon>
        <taxon>Pinus</taxon>
        <taxon>Pinus subgen. Strobus</taxon>
    </lineage>
</organism>
<gene>
    <name evidence="1" type="primary">cemA</name>
    <name type="synonym">ycf10</name>
</gene>
<protein>
    <recommendedName>
        <fullName evidence="1">Potassium/proton antiporter CemA</fullName>
    </recommendedName>
    <alternativeName>
        <fullName evidence="1">Chloroplast envelope membrane protein A</fullName>
        <shortName evidence="1">CemA</shortName>
    </alternativeName>
</protein>
<comment type="function">
    <text evidence="1">Contributes to K(+)/H(+) antiport activity by supporting proton efflux to control proton extrusion and homeostasis in chloroplasts in a light-dependent manner to modulate photosynthesis. Prevents excessive induction of non-photochemical quenching (NPQ) under continuous-light conditions. Indirectly promotes efficient inorganic carbon uptake into chloroplasts.</text>
</comment>
<comment type="catalytic activity">
    <reaction evidence="1">
        <text>K(+)(in) + H(+)(out) = K(+)(out) + H(+)(in)</text>
        <dbReference type="Rhea" id="RHEA:29467"/>
        <dbReference type="ChEBI" id="CHEBI:15378"/>
        <dbReference type="ChEBI" id="CHEBI:29103"/>
    </reaction>
</comment>
<comment type="subcellular location">
    <subcellularLocation>
        <location evidence="1">Plastid</location>
        <location evidence="1">Chloroplast inner membrane</location>
        <topology evidence="1">Multi-pass membrane protein</topology>
    </subcellularLocation>
</comment>
<comment type="similarity">
    <text evidence="1 2">Belongs to the CemA family.</text>
</comment>
<comment type="sequence caution" evidence="2">
    <conflict type="erroneous initiation">
        <sequence resource="EMBL-CDS" id="ABP35359"/>
    </conflict>
    <text>Extended N-terminus.</text>
</comment>
<name>CEMA_PINKO</name>
<geneLocation type="chloroplast"/>
<sequence length="261" mass="30173">MDPIPHSITRTLSRFRTELTSESGSLAIHELEVAEYKASASLRYLACLVGLPWVIPISLRKGLEPWVTNWWNTGKSHQIFDYLQEENALGRFEKIEELFLLERMVEDSSGTHSQDLRIEIHKETIQLVEMYNEDCIQIISHLLTNLIGFAFISAYLILGKNQLAIINSWIQEFFYSLSDTMKAFLILLATDLCIGFHSPHGWELMIDSISENYGFAHNERIISGLVSTFPVILDTILKYWIFRRFNRISPSLVVIYHSMNE</sequence>
<proteinExistence type="inferred from homology"/>
<accession>A4QM32</accession>
<accession>A4QM33</accession>
<keyword id="KW-0050">Antiport</keyword>
<keyword id="KW-0150">Chloroplast</keyword>
<keyword id="KW-0375">Hydrogen ion transport</keyword>
<keyword id="KW-0406">Ion transport</keyword>
<keyword id="KW-0472">Membrane</keyword>
<keyword id="KW-0934">Plastid</keyword>
<keyword id="KW-1001">Plastid inner membrane</keyword>
<keyword id="KW-0630">Potassium</keyword>
<keyword id="KW-0633">Potassium transport</keyword>
<keyword id="KW-0812">Transmembrane</keyword>
<keyword id="KW-1133">Transmembrane helix</keyword>
<keyword id="KW-0813">Transport</keyword>
<feature type="chain" id="PRO_0000293528" description="Potassium/proton antiporter CemA">
    <location>
        <begin position="1"/>
        <end position="261"/>
    </location>
</feature>
<feature type="transmembrane region" description="Helical" evidence="1">
    <location>
        <begin position="138"/>
        <end position="158"/>
    </location>
</feature>
<feature type="transmembrane region" description="Helical" evidence="1">
    <location>
        <begin position="184"/>
        <end position="204"/>
    </location>
</feature>
<feature type="transmembrane region" description="Helical" evidence="1">
    <location>
        <begin position="221"/>
        <end position="241"/>
    </location>
</feature>